<keyword id="KW-0963">Cytoplasm</keyword>
<keyword id="KW-0275">Fatty acid biosynthesis</keyword>
<keyword id="KW-0276">Fatty acid metabolism</keyword>
<keyword id="KW-0444">Lipid biosynthesis</keyword>
<keyword id="KW-0443">Lipid metabolism</keyword>
<keyword id="KW-0596">Phosphopantetheine</keyword>
<keyword id="KW-0597">Phosphoprotein</keyword>
<dbReference type="EMBL" id="AE017197">
    <property type="protein sequence ID" value="AAU04206.1"/>
    <property type="status" value="ALT_INIT"/>
    <property type="molecule type" value="Genomic_DNA"/>
</dbReference>
<dbReference type="SMR" id="Q68VY6"/>
<dbReference type="KEGG" id="rty:RT0749"/>
<dbReference type="eggNOG" id="COG0236">
    <property type="taxonomic scope" value="Bacteria"/>
</dbReference>
<dbReference type="HOGENOM" id="CLU_108696_5_6_5"/>
<dbReference type="UniPathway" id="UPA00094"/>
<dbReference type="Proteomes" id="UP000000604">
    <property type="component" value="Chromosome"/>
</dbReference>
<dbReference type="GO" id="GO:0005829">
    <property type="term" value="C:cytosol"/>
    <property type="evidence" value="ECO:0007669"/>
    <property type="project" value="TreeGrafter"/>
</dbReference>
<dbReference type="GO" id="GO:0016020">
    <property type="term" value="C:membrane"/>
    <property type="evidence" value="ECO:0007669"/>
    <property type="project" value="GOC"/>
</dbReference>
<dbReference type="GO" id="GO:0000035">
    <property type="term" value="F:acyl binding"/>
    <property type="evidence" value="ECO:0007669"/>
    <property type="project" value="TreeGrafter"/>
</dbReference>
<dbReference type="GO" id="GO:0000036">
    <property type="term" value="F:acyl carrier activity"/>
    <property type="evidence" value="ECO:0007669"/>
    <property type="project" value="UniProtKB-UniRule"/>
</dbReference>
<dbReference type="GO" id="GO:0009245">
    <property type="term" value="P:lipid A biosynthetic process"/>
    <property type="evidence" value="ECO:0007669"/>
    <property type="project" value="TreeGrafter"/>
</dbReference>
<dbReference type="Gene3D" id="1.10.1200.10">
    <property type="entry name" value="ACP-like"/>
    <property type="match status" value="1"/>
</dbReference>
<dbReference type="HAMAP" id="MF_01217">
    <property type="entry name" value="Acyl_carrier"/>
    <property type="match status" value="1"/>
</dbReference>
<dbReference type="InterPro" id="IPR003231">
    <property type="entry name" value="ACP"/>
</dbReference>
<dbReference type="InterPro" id="IPR036736">
    <property type="entry name" value="ACP-like_sf"/>
</dbReference>
<dbReference type="InterPro" id="IPR009081">
    <property type="entry name" value="PP-bd_ACP"/>
</dbReference>
<dbReference type="NCBIfam" id="TIGR00517">
    <property type="entry name" value="acyl_carrier"/>
    <property type="match status" value="1"/>
</dbReference>
<dbReference type="NCBIfam" id="NF002148">
    <property type="entry name" value="PRK00982.1-2"/>
    <property type="match status" value="1"/>
</dbReference>
<dbReference type="NCBIfam" id="NF002150">
    <property type="entry name" value="PRK00982.1-4"/>
    <property type="match status" value="1"/>
</dbReference>
<dbReference type="PANTHER" id="PTHR20863">
    <property type="entry name" value="ACYL CARRIER PROTEIN"/>
    <property type="match status" value="1"/>
</dbReference>
<dbReference type="PANTHER" id="PTHR20863:SF76">
    <property type="entry name" value="CARRIER DOMAIN-CONTAINING PROTEIN"/>
    <property type="match status" value="1"/>
</dbReference>
<dbReference type="Pfam" id="PF00550">
    <property type="entry name" value="PP-binding"/>
    <property type="match status" value="1"/>
</dbReference>
<dbReference type="SUPFAM" id="SSF47336">
    <property type="entry name" value="ACP-like"/>
    <property type="match status" value="1"/>
</dbReference>
<dbReference type="PROSITE" id="PS50075">
    <property type="entry name" value="CARRIER"/>
    <property type="match status" value="1"/>
</dbReference>
<proteinExistence type="inferred from homology"/>
<protein>
    <recommendedName>
        <fullName evidence="1">Acyl carrier protein</fullName>
        <shortName evidence="1">ACP</shortName>
    </recommendedName>
</protein>
<sequence length="86" mass="9887">MEFKIMSTTDKIEQKVIEMVAEKLNKDKAIITTDSRFIEDLKADSLDTVELMMAIEVEYGIDIPDDEATKIKTVSDVIKYIKERQS</sequence>
<reference key="1">
    <citation type="journal article" date="2004" name="J. Bacteriol.">
        <title>Complete genome sequence of Rickettsia typhi and comparison with sequences of other Rickettsiae.</title>
        <authorList>
            <person name="McLeod M.P."/>
            <person name="Qin X."/>
            <person name="Karpathy S.E."/>
            <person name="Gioia J."/>
            <person name="Highlander S.K."/>
            <person name="Fox G.E."/>
            <person name="McNeill T.Z."/>
            <person name="Jiang H."/>
            <person name="Muzny D."/>
            <person name="Jacob L.S."/>
            <person name="Hawes A.C."/>
            <person name="Sodergren E."/>
            <person name="Gill R."/>
            <person name="Hume J."/>
            <person name="Morgan M."/>
            <person name="Fan G."/>
            <person name="Amin A.G."/>
            <person name="Gibbs R.A."/>
            <person name="Hong C."/>
            <person name="Yu X.-J."/>
            <person name="Walker D.H."/>
            <person name="Weinstock G.M."/>
        </authorList>
    </citation>
    <scope>NUCLEOTIDE SEQUENCE [LARGE SCALE GENOMIC DNA]</scope>
    <source>
        <strain>ATCC VR-144 / Wilmington</strain>
    </source>
</reference>
<gene>
    <name evidence="1" type="primary">acpP</name>
    <name type="ordered locus">RT0749</name>
</gene>
<comment type="function">
    <text evidence="1">Carrier of the growing fatty acid chain in fatty acid biosynthesis.</text>
</comment>
<comment type="pathway">
    <text evidence="1">Lipid metabolism; fatty acid biosynthesis.</text>
</comment>
<comment type="subcellular location">
    <subcellularLocation>
        <location evidence="1">Cytoplasm</location>
    </subcellularLocation>
</comment>
<comment type="PTM">
    <text evidence="1">4'-phosphopantetheine is transferred from CoA to a specific serine of apo-ACP by AcpS. This modification is essential for activity because fatty acids are bound in thioester linkage to the sulfhydryl of the prosthetic group.</text>
</comment>
<comment type="similarity">
    <text evidence="1">Belongs to the acyl carrier protein (ACP) family.</text>
</comment>
<comment type="sequence caution" evidence="3">
    <conflict type="erroneous initiation">
        <sequence resource="EMBL-CDS" id="AAU04206"/>
    </conflict>
</comment>
<accession>Q68VY6</accession>
<organism>
    <name type="scientific">Rickettsia typhi (strain ATCC VR-144 / Wilmington)</name>
    <dbReference type="NCBI Taxonomy" id="257363"/>
    <lineage>
        <taxon>Bacteria</taxon>
        <taxon>Pseudomonadati</taxon>
        <taxon>Pseudomonadota</taxon>
        <taxon>Alphaproteobacteria</taxon>
        <taxon>Rickettsiales</taxon>
        <taxon>Rickettsiaceae</taxon>
        <taxon>Rickettsieae</taxon>
        <taxon>Rickettsia</taxon>
        <taxon>typhus group</taxon>
    </lineage>
</organism>
<feature type="chain" id="PRO_0000272412" description="Acyl carrier protein">
    <location>
        <begin position="1"/>
        <end position="86"/>
    </location>
</feature>
<feature type="domain" description="Carrier" evidence="2">
    <location>
        <begin position="10"/>
        <end position="85"/>
    </location>
</feature>
<feature type="modified residue" description="O-(pantetheine 4'-phosphoryl)serine" evidence="2">
    <location>
        <position position="45"/>
    </location>
</feature>
<name>ACP_RICTY</name>
<evidence type="ECO:0000255" key="1">
    <source>
        <dbReference type="HAMAP-Rule" id="MF_01217"/>
    </source>
</evidence>
<evidence type="ECO:0000255" key="2">
    <source>
        <dbReference type="PROSITE-ProRule" id="PRU00258"/>
    </source>
</evidence>
<evidence type="ECO:0000305" key="3"/>